<organism>
    <name type="scientific">Rhodopirellula baltica (strain DSM 10527 / NCIMB 13988 / SH1)</name>
    <dbReference type="NCBI Taxonomy" id="243090"/>
    <lineage>
        <taxon>Bacteria</taxon>
        <taxon>Pseudomonadati</taxon>
        <taxon>Planctomycetota</taxon>
        <taxon>Planctomycetia</taxon>
        <taxon>Pirellulales</taxon>
        <taxon>Pirellulaceae</taxon>
        <taxon>Rhodopirellula</taxon>
    </lineage>
</organism>
<gene>
    <name evidence="1" type="primary">atpH</name>
    <name type="ordered locus">RB10213</name>
</gene>
<sequence length="227" mass="24508">MVKLPSLKFLRRSTDETPNVSETASHSTVLDVGAEKLGKTYARALLAATQADGSTDAVVSDLNAICDEALLHNPKLQLAFQSPQIDADEKCRVVDRLFGGNSHPTLIKLMKVMAKRGRLGYLVAVRDAAVDLFDEAAGRVVAEVRTAVPMTEQLRGEVTQQLSSRFGKTVRLRESVDTELIGGMVIRVGDTVFDSSVASRLDKLGKSAAAGFARQLIEQSDRFSSSS</sequence>
<reference key="1">
    <citation type="journal article" date="2003" name="Proc. Natl. Acad. Sci. U.S.A.">
        <title>Complete genome sequence of the marine planctomycete Pirellula sp. strain 1.</title>
        <authorList>
            <person name="Gloeckner F.O."/>
            <person name="Kube M."/>
            <person name="Bauer M."/>
            <person name="Teeling H."/>
            <person name="Lombardot T."/>
            <person name="Ludwig W."/>
            <person name="Gade D."/>
            <person name="Beck A."/>
            <person name="Borzym K."/>
            <person name="Heitmann K."/>
            <person name="Rabus R."/>
            <person name="Schlesner H."/>
            <person name="Amann R."/>
            <person name="Reinhardt R."/>
        </authorList>
    </citation>
    <scope>NUCLEOTIDE SEQUENCE [LARGE SCALE GENOMIC DNA]</scope>
    <source>
        <strain>DSM 10527 / NCIMB 13988 / SH1</strain>
    </source>
</reference>
<keyword id="KW-0066">ATP synthesis</keyword>
<keyword id="KW-0997">Cell inner membrane</keyword>
<keyword id="KW-1003">Cell membrane</keyword>
<keyword id="KW-0139">CF(1)</keyword>
<keyword id="KW-0375">Hydrogen ion transport</keyword>
<keyword id="KW-0406">Ion transport</keyword>
<keyword id="KW-0472">Membrane</keyword>
<keyword id="KW-1185">Reference proteome</keyword>
<keyword id="KW-0813">Transport</keyword>
<proteinExistence type="inferred from homology"/>
<comment type="function">
    <text evidence="1">F(1)F(0) ATP synthase produces ATP from ADP in the presence of a proton or sodium gradient. F-type ATPases consist of two structural domains, F(1) containing the extramembraneous catalytic core and F(0) containing the membrane proton channel, linked together by a central stalk and a peripheral stalk. During catalysis, ATP synthesis in the catalytic domain of F(1) is coupled via a rotary mechanism of the central stalk subunits to proton translocation.</text>
</comment>
<comment type="function">
    <text evidence="1">This protein is part of the stalk that links CF(0) to CF(1). It either transmits conformational changes from CF(0) to CF(1) or is implicated in proton conduction.</text>
</comment>
<comment type="subunit">
    <text evidence="1">F-type ATPases have 2 components, F(1) - the catalytic core - and F(0) - the membrane proton channel. F(1) has five subunits: alpha(3), beta(3), gamma(1), delta(1), epsilon(1). F(0) has three main subunits: a(1), b(2) and c(10-14). The alpha and beta chains form an alternating ring which encloses part of the gamma chain. F(1) is attached to F(0) by a central stalk formed by the gamma and epsilon chains, while a peripheral stalk is formed by the delta and b chains.</text>
</comment>
<comment type="subcellular location">
    <subcellularLocation>
        <location evidence="1">Cell inner membrane</location>
        <topology evidence="1">Peripheral membrane protein</topology>
    </subcellularLocation>
</comment>
<comment type="similarity">
    <text evidence="1">Belongs to the ATPase delta chain family.</text>
</comment>
<feature type="chain" id="PRO_0000382146" description="ATP synthase subunit delta">
    <location>
        <begin position="1"/>
        <end position="227"/>
    </location>
</feature>
<accession>Q7UFB8</accession>
<evidence type="ECO:0000255" key="1">
    <source>
        <dbReference type="HAMAP-Rule" id="MF_01416"/>
    </source>
</evidence>
<dbReference type="EMBL" id="BX294151">
    <property type="protein sequence ID" value="CAD78765.1"/>
    <property type="molecule type" value="Genomic_DNA"/>
</dbReference>
<dbReference type="RefSeq" id="NP_869308.1">
    <property type="nucleotide sequence ID" value="NC_005027.1"/>
</dbReference>
<dbReference type="RefSeq" id="WP_011122670.1">
    <property type="nucleotide sequence ID" value="NC_005027.1"/>
</dbReference>
<dbReference type="SMR" id="Q7UFB8"/>
<dbReference type="STRING" id="243090.RB10213"/>
<dbReference type="EnsemblBacteria" id="CAD78765">
    <property type="protein sequence ID" value="CAD78765"/>
    <property type="gene ID" value="RB10213"/>
</dbReference>
<dbReference type="KEGG" id="rba:RB10213"/>
<dbReference type="PATRIC" id="fig|243090.15.peg.4930"/>
<dbReference type="eggNOG" id="COG0712">
    <property type="taxonomic scope" value="Bacteria"/>
</dbReference>
<dbReference type="HOGENOM" id="CLU_085114_4_0_0"/>
<dbReference type="InParanoid" id="Q7UFB8"/>
<dbReference type="OrthoDB" id="9802471at2"/>
<dbReference type="Proteomes" id="UP000001025">
    <property type="component" value="Chromosome"/>
</dbReference>
<dbReference type="GO" id="GO:0005886">
    <property type="term" value="C:plasma membrane"/>
    <property type="evidence" value="ECO:0007669"/>
    <property type="project" value="UniProtKB-SubCell"/>
</dbReference>
<dbReference type="GO" id="GO:0045259">
    <property type="term" value="C:proton-transporting ATP synthase complex"/>
    <property type="evidence" value="ECO:0007669"/>
    <property type="project" value="UniProtKB-KW"/>
</dbReference>
<dbReference type="GO" id="GO:0046933">
    <property type="term" value="F:proton-transporting ATP synthase activity, rotational mechanism"/>
    <property type="evidence" value="ECO:0007669"/>
    <property type="project" value="UniProtKB-UniRule"/>
</dbReference>
<dbReference type="GO" id="GO:0015986">
    <property type="term" value="P:proton motive force-driven ATP synthesis"/>
    <property type="evidence" value="ECO:0000318"/>
    <property type="project" value="GO_Central"/>
</dbReference>
<dbReference type="Gene3D" id="1.10.520.20">
    <property type="entry name" value="N-terminal domain of the delta subunit of the F1F0-ATP synthase"/>
    <property type="match status" value="1"/>
</dbReference>
<dbReference type="HAMAP" id="MF_01416">
    <property type="entry name" value="ATP_synth_delta_bact"/>
    <property type="match status" value="1"/>
</dbReference>
<dbReference type="InterPro" id="IPR026015">
    <property type="entry name" value="ATP_synth_OSCP/delta_N_sf"/>
</dbReference>
<dbReference type="InterPro" id="IPR020781">
    <property type="entry name" value="ATPase_OSCP/d_CS"/>
</dbReference>
<dbReference type="InterPro" id="IPR000711">
    <property type="entry name" value="ATPase_OSCP/dsu"/>
</dbReference>
<dbReference type="NCBIfam" id="TIGR01145">
    <property type="entry name" value="ATP_synt_delta"/>
    <property type="match status" value="1"/>
</dbReference>
<dbReference type="PANTHER" id="PTHR11910">
    <property type="entry name" value="ATP SYNTHASE DELTA CHAIN"/>
    <property type="match status" value="1"/>
</dbReference>
<dbReference type="Pfam" id="PF00213">
    <property type="entry name" value="OSCP"/>
    <property type="match status" value="1"/>
</dbReference>
<dbReference type="PRINTS" id="PR00125">
    <property type="entry name" value="ATPASEDELTA"/>
</dbReference>
<dbReference type="SUPFAM" id="SSF47928">
    <property type="entry name" value="N-terminal domain of the delta subunit of the F1F0-ATP synthase"/>
    <property type="match status" value="1"/>
</dbReference>
<dbReference type="PROSITE" id="PS00389">
    <property type="entry name" value="ATPASE_DELTA"/>
    <property type="match status" value="1"/>
</dbReference>
<protein>
    <recommendedName>
        <fullName evidence="1">ATP synthase subunit delta</fullName>
    </recommendedName>
    <alternativeName>
        <fullName evidence="1">ATP synthase F(1) sector subunit delta</fullName>
    </alternativeName>
    <alternativeName>
        <fullName evidence="1">F-type ATPase subunit delta</fullName>
        <shortName evidence="1">F-ATPase subunit delta</shortName>
    </alternativeName>
</protein>
<name>ATPD_RHOBA</name>